<name>KPRS1_LISIN</name>
<dbReference type="EC" id="2.7.6.1" evidence="1"/>
<dbReference type="EMBL" id="AL596164">
    <property type="protein sequence ID" value="CAC95471.1"/>
    <property type="molecule type" value="Genomic_DNA"/>
</dbReference>
<dbReference type="PIR" id="AG1462">
    <property type="entry name" value="AG1462"/>
</dbReference>
<dbReference type="RefSeq" id="WP_003764989.1">
    <property type="nucleotide sequence ID" value="NC_003212.1"/>
</dbReference>
<dbReference type="SMR" id="Q92F68"/>
<dbReference type="STRING" id="272626.gene:17564550"/>
<dbReference type="KEGG" id="lin:prs.1"/>
<dbReference type="eggNOG" id="COG0462">
    <property type="taxonomic scope" value="Bacteria"/>
</dbReference>
<dbReference type="HOGENOM" id="CLU_033546_4_0_9"/>
<dbReference type="OrthoDB" id="9777067at2"/>
<dbReference type="UniPathway" id="UPA00087">
    <property type="reaction ID" value="UER00172"/>
</dbReference>
<dbReference type="Proteomes" id="UP000002513">
    <property type="component" value="Chromosome"/>
</dbReference>
<dbReference type="GO" id="GO:0005737">
    <property type="term" value="C:cytoplasm"/>
    <property type="evidence" value="ECO:0007669"/>
    <property type="project" value="UniProtKB-SubCell"/>
</dbReference>
<dbReference type="GO" id="GO:0002189">
    <property type="term" value="C:ribose phosphate diphosphokinase complex"/>
    <property type="evidence" value="ECO:0007669"/>
    <property type="project" value="TreeGrafter"/>
</dbReference>
<dbReference type="GO" id="GO:0005524">
    <property type="term" value="F:ATP binding"/>
    <property type="evidence" value="ECO:0007669"/>
    <property type="project" value="UniProtKB-KW"/>
</dbReference>
<dbReference type="GO" id="GO:0016301">
    <property type="term" value="F:kinase activity"/>
    <property type="evidence" value="ECO:0007669"/>
    <property type="project" value="UniProtKB-KW"/>
</dbReference>
<dbReference type="GO" id="GO:0000287">
    <property type="term" value="F:magnesium ion binding"/>
    <property type="evidence" value="ECO:0007669"/>
    <property type="project" value="UniProtKB-UniRule"/>
</dbReference>
<dbReference type="GO" id="GO:0004749">
    <property type="term" value="F:ribose phosphate diphosphokinase activity"/>
    <property type="evidence" value="ECO:0007669"/>
    <property type="project" value="UniProtKB-UniRule"/>
</dbReference>
<dbReference type="GO" id="GO:0006015">
    <property type="term" value="P:5-phosphoribose 1-diphosphate biosynthetic process"/>
    <property type="evidence" value="ECO:0007669"/>
    <property type="project" value="UniProtKB-UniRule"/>
</dbReference>
<dbReference type="GO" id="GO:0006164">
    <property type="term" value="P:purine nucleotide biosynthetic process"/>
    <property type="evidence" value="ECO:0007669"/>
    <property type="project" value="TreeGrafter"/>
</dbReference>
<dbReference type="GO" id="GO:0009156">
    <property type="term" value="P:ribonucleoside monophosphate biosynthetic process"/>
    <property type="evidence" value="ECO:0007669"/>
    <property type="project" value="InterPro"/>
</dbReference>
<dbReference type="CDD" id="cd06223">
    <property type="entry name" value="PRTases_typeI"/>
    <property type="match status" value="1"/>
</dbReference>
<dbReference type="FunFam" id="3.40.50.2020:FF:000007">
    <property type="entry name" value="Ribose-phosphate pyrophosphokinase"/>
    <property type="match status" value="1"/>
</dbReference>
<dbReference type="FunFam" id="3.40.50.2020:FF:000005">
    <property type="entry name" value="Ribose-phosphate pyrophosphokinase 1"/>
    <property type="match status" value="1"/>
</dbReference>
<dbReference type="Gene3D" id="3.40.50.2020">
    <property type="match status" value="2"/>
</dbReference>
<dbReference type="HAMAP" id="MF_00583_B">
    <property type="entry name" value="RibP_PPkinase_B"/>
    <property type="match status" value="1"/>
</dbReference>
<dbReference type="InterPro" id="IPR000842">
    <property type="entry name" value="PRib_PP_synth_CS"/>
</dbReference>
<dbReference type="InterPro" id="IPR029099">
    <property type="entry name" value="Pribosyltran_N"/>
</dbReference>
<dbReference type="InterPro" id="IPR000836">
    <property type="entry name" value="PRibTrfase_dom"/>
</dbReference>
<dbReference type="InterPro" id="IPR029057">
    <property type="entry name" value="PRTase-like"/>
</dbReference>
<dbReference type="InterPro" id="IPR005946">
    <property type="entry name" value="Rib-P_diPkinase"/>
</dbReference>
<dbReference type="InterPro" id="IPR037515">
    <property type="entry name" value="Rib-P_diPkinase_bac"/>
</dbReference>
<dbReference type="NCBIfam" id="NF002320">
    <property type="entry name" value="PRK01259.1"/>
    <property type="match status" value="1"/>
</dbReference>
<dbReference type="NCBIfam" id="NF002618">
    <property type="entry name" value="PRK02269.1"/>
    <property type="match status" value="1"/>
</dbReference>
<dbReference type="NCBIfam" id="TIGR01251">
    <property type="entry name" value="ribP_PPkin"/>
    <property type="match status" value="1"/>
</dbReference>
<dbReference type="PANTHER" id="PTHR10210">
    <property type="entry name" value="RIBOSE-PHOSPHATE DIPHOSPHOKINASE FAMILY MEMBER"/>
    <property type="match status" value="1"/>
</dbReference>
<dbReference type="PANTHER" id="PTHR10210:SF41">
    <property type="entry name" value="RIBOSE-PHOSPHATE PYROPHOSPHOKINASE 1, CHLOROPLASTIC"/>
    <property type="match status" value="1"/>
</dbReference>
<dbReference type="Pfam" id="PF14572">
    <property type="entry name" value="Pribosyl_synth"/>
    <property type="match status" value="1"/>
</dbReference>
<dbReference type="Pfam" id="PF13793">
    <property type="entry name" value="Pribosyltran_N"/>
    <property type="match status" value="1"/>
</dbReference>
<dbReference type="SMART" id="SM01400">
    <property type="entry name" value="Pribosyltran_N"/>
    <property type="match status" value="1"/>
</dbReference>
<dbReference type="SUPFAM" id="SSF53271">
    <property type="entry name" value="PRTase-like"/>
    <property type="match status" value="1"/>
</dbReference>
<dbReference type="PROSITE" id="PS00114">
    <property type="entry name" value="PRPP_SYNTHASE"/>
    <property type="match status" value="1"/>
</dbReference>
<gene>
    <name evidence="1" type="primary">prs1</name>
    <name type="ordered locus">lin0238</name>
</gene>
<reference key="1">
    <citation type="journal article" date="2001" name="Science">
        <title>Comparative genomics of Listeria species.</title>
        <authorList>
            <person name="Glaser P."/>
            <person name="Frangeul L."/>
            <person name="Buchrieser C."/>
            <person name="Rusniok C."/>
            <person name="Amend A."/>
            <person name="Baquero F."/>
            <person name="Berche P."/>
            <person name="Bloecker H."/>
            <person name="Brandt P."/>
            <person name="Chakraborty T."/>
            <person name="Charbit A."/>
            <person name="Chetouani F."/>
            <person name="Couve E."/>
            <person name="de Daruvar A."/>
            <person name="Dehoux P."/>
            <person name="Domann E."/>
            <person name="Dominguez-Bernal G."/>
            <person name="Duchaud E."/>
            <person name="Durant L."/>
            <person name="Dussurget O."/>
            <person name="Entian K.-D."/>
            <person name="Fsihi H."/>
            <person name="Garcia-del Portillo F."/>
            <person name="Garrido P."/>
            <person name="Gautier L."/>
            <person name="Goebel W."/>
            <person name="Gomez-Lopez N."/>
            <person name="Hain T."/>
            <person name="Hauf J."/>
            <person name="Jackson D."/>
            <person name="Jones L.-M."/>
            <person name="Kaerst U."/>
            <person name="Kreft J."/>
            <person name="Kuhn M."/>
            <person name="Kunst F."/>
            <person name="Kurapkat G."/>
            <person name="Madueno E."/>
            <person name="Maitournam A."/>
            <person name="Mata Vicente J."/>
            <person name="Ng E."/>
            <person name="Nedjari H."/>
            <person name="Nordsiek G."/>
            <person name="Novella S."/>
            <person name="de Pablos B."/>
            <person name="Perez-Diaz J.-C."/>
            <person name="Purcell R."/>
            <person name="Remmel B."/>
            <person name="Rose M."/>
            <person name="Schlueter T."/>
            <person name="Simoes N."/>
            <person name="Tierrez A."/>
            <person name="Vazquez-Boland J.-A."/>
            <person name="Voss H."/>
            <person name="Wehland J."/>
            <person name="Cossart P."/>
        </authorList>
    </citation>
    <scope>NUCLEOTIDE SEQUENCE [LARGE SCALE GENOMIC DNA]</scope>
    <source>
        <strain>ATCC BAA-680 / CLIP 11262</strain>
    </source>
</reference>
<comment type="function">
    <text evidence="1">Involved in the biosynthesis of the central metabolite phospho-alpha-D-ribosyl-1-pyrophosphate (PRPP) via the transfer of pyrophosphoryl group from ATP to 1-hydroxyl of ribose-5-phosphate (Rib-5-P).</text>
</comment>
<comment type="catalytic activity">
    <reaction evidence="1">
        <text>D-ribose 5-phosphate + ATP = 5-phospho-alpha-D-ribose 1-diphosphate + AMP + H(+)</text>
        <dbReference type="Rhea" id="RHEA:15609"/>
        <dbReference type="ChEBI" id="CHEBI:15378"/>
        <dbReference type="ChEBI" id="CHEBI:30616"/>
        <dbReference type="ChEBI" id="CHEBI:58017"/>
        <dbReference type="ChEBI" id="CHEBI:78346"/>
        <dbReference type="ChEBI" id="CHEBI:456215"/>
        <dbReference type="EC" id="2.7.6.1"/>
    </reaction>
</comment>
<comment type="cofactor">
    <cofactor evidence="1">
        <name>Mg(2+)</name>
        <dbReference type="ChEBI" id="CHEBI:18420"/>
    </cofactor>
    <text evidence="1">Binds 2 Mg(2+) ions per subunit.</text>
</comment>
<comment type="pathway">
    <text evidence="1">Metabolic intermediate biosynthesis; 5-phospho-alpha-D-ribose 1-diphosphate biosynthesis; 5-phospho-alpha-D-ribose 1-diphosphate from D-ribose 5-phosphate (route I): step 1/1.</text>
</comment>
<comment type="subunit">
    <text evidence="1">Homohexamer.</text>
</comment>
<comment type="subcellular location">
    <subcellularLocation>
        <location evidence="1">Cytoplasm</location>
    </subcellularLocation>
</comment>
<comment type="similarity">
    <text evidence="1">Belongs to the ribose-phosphate pyrophosphokinase family. Class I subfamily.</text>
</comment>
<sequence length="318" mass="35055">MSNEYFDPKLKIFSLNSNRELAEEIAKEVGIELGKSSVTHFSDGEIQINIEESIRGCHVYVIQSTSNPVNQNLMELLIMIDALKRASAATINIVMPYYGYARQDRKARSREPITAKLVANLIETAGATRMITLDMHAPQIQGFFDIPIDHLNAVRLLSDYFSERHLGDDLVVVSPDHGGVTRARKMADRLKAPIAIIDKRRPRPNVAEVMNIVGNVEGKVCIIIDDIIDTAGTITLAAKALREAGATKVYACCSHPVLSGPAMKRIEDSPIEKLVVTNSIALPEEKWIDKMEQLSVAALLGEAIVRVHENASVSSLFE</sequence>
<feature type="chain" id="PRO_0000141152" description="Ribose-phosphate pyrophosphokinase 1">
    <location>
        <begin position="1"/>
        <end position="318"/>
    </location>
</feature>
<feature type="active site" evidence="1">
    <location>
        <position position="199"/>
    </location>
</feature>
<feature type="binding site" evidence="1">
    <location>
        <begin position="43"/>
        <end position="45"/>
    </location>
    <ligand>
        <name>ATP</name>
        <dbReference type="ChEBI" id="CHEBI:30616"/>
    </ligand>
</feature>
<feature type="binding site" evidence="1">
    <location>
        <begin position="102"/>
        <end position="103"/>
    </location>
    <ligand>
        <name>ATP</name>
        <dbReference type="ChEBI" id="CHEBI:30616"/>
    </ligand>
</feature>
<feature type="binding site" evidence="1">
    <location>
        <position position="136"/>
    </location>
    <ligand>
        <name>Mg(2+)</name>
        <dbReference type="ChEBI" id="CHEBI:18420"/>
        <label>1</label>
    </ligand>
</feature>
<feature type="binding site" evidence="1">
    <location>
        <position position="176"/>
    </location>
    <ligand>
        <name>Mg(2+)</name>
        <dbReference type="ChEBI" id="CHEBI:18420"/>
        <label>2</label>
    </ligand>
</feature>
<feature type="binding site" evidence="1">
    <location>
        <position position="201"/>
    </location>
    <ligand>
        <name>D-ribose 5-phosphate</name>
        <dbReference type="ChEBI" id="CHEBI:78346"/>
    </ligand>
</feature>
<feature type="binding site" evidence="1">
    <location>
        <position position="225"/>
    </location>
    <ligand>
        <name>D-ribose 5-phosphate</name>
        <dbReference type="ChEBI" id="CHEBI:78346"/>
    </ligand>
</feature>
<feature type="binding site" evidence="1">
    <location>
        <begin position="229"/>
        <end position="233"/>
    </location>
    <ligand>
        <name>D-ribose 5-phosphate</name>
        <dbReference type="ChEBI" id="CHEBI:78346"/>
    </ligand>
</feature>
<evidence type="ECO:0000255" key="1">
    <source>
        <dbReference type="HAMAP-Rule" id="MF_00583"/>
    </source>
</evidence>
<proteinExistence type="inferred from homology"/>
<accession>Q92F68</accession>
<organism>
    <name type="scientific">Listeria innocua serovar 6a (strain ATCC BAA-680 / CLIP 11262)</name>
    <dbReference type="NCBI Taxonomy" id="272626"/>
    <lineage>
        <taxon>Bacteria</taxon>
        <taxon>Bacillati</taxon>
        <taxon>Bacillota</taxon>
        <taxon>Bacilli</taxon>
        <taxon>Bacillales</taxon>
        <taxon>Listeriaceae</taxon>
        <taxon>Listeria</taxon>
    </lineage>
</organism>
<keyword id="KW-0067">ATP-binding</keyword>
<keyword id="KW-0963">Cytoplasm</keyword>
<keyword id="KW-0418">Kinase</keyword>
<keyword id="KW-0460">Magnesium</keyword>
<keyword id="KW-0479">Metal-binding</keyword>
<keyword id="KW-0545">Nucleotide biosynthesis</keyword>
<keyword id="KW-0547">Nucleotide-binding</keyword>
<keyword id="KW-0808">Transferase</keyword>
<protein>
    <recommendedName>
        <fullName evidence="1">Ribose-phosphate pyrophosphokinase 1</fullName>
        <shortName evidence="1">RPPK 1</shortName>
        <ecNumber evidence="1">2.7.6.1</ecNumber>
    </recommendedName>
    <alternativeName>
        <fullName evidence="1">5-phospho-D-ribosyl alpha-1-diphosphate synthase 1</fullName>
    </alternativeName>
    <alternativeName>
        <fullName evidence="1">Phosphoribosyl diphosphate synthase 1</fullName>
    </alternativeName>
    <alternativeName>
        <fullName evidence="1">Phosphoribosyl pyrophosphate synthase 1</fullName>
        <shortName evidence="1">P-Rib-PP synthase 1</shortName>
        <shortName evidence="1">PRPP synthase 1</shortName>
        <shortName evidence="1">PRPPase 1</shortName>
    </alternativeName>
</protein>